<evidence type="ECO:0000255" key="1">
    <source>
        <dbReference type="HAMAP-Rule" id="MF_00719"/>
    </source>
</evidence>
<organism>
    <name type="scientific">Escherichia coli O9:H4 (strain HS)</name>
    <dbReference type="NCBI Taxonomy" id="331112"/>
    <lineage>
        <taxon>Bacteria</taxon>
        <taxon>Pseudomonadati</taxon>
        <taxon>Pseudomonadota</taxon>
        <taxon>Gammaproteobacteria</taxon>
        <taxon>Enterobacterales</taxon>
        <taxon>Enterobacteriaceae</taxon>
        <taxon>Escherichia</taxon>
    </lineage>
</organism>
<reference key="1">
    <citation type="journal article" date="2008" name="J. Bacteriol.">
        <title>The pangenome structure of Escherichia coli: comparative genomic analysis of E. coli commensal and pathogenic isolates.</title>
        <authorList>
            <person name="Rasko D.A."/>
            <person name="Rosovitz M.J."/>
            <person name="Myers G.S.A."/>
            <person name="Mongodin E.F."/>
            <person name="Fricke W.F."/>
            <person name="Gajer P."/>
            <person name="Crabtree J."/>
            <person name="Sebaihia M."/>
            <person name="Thomson N.R."/>
            <person name="Chaudhuri R."/>
            <person name="Henderson I.R."/>
            <person name="Sperandio V."/>
            <person name="Ravel J."/>
        </authorList>
    </citation>
    <scope>NUCLEOTIDE SEQUENCE [LARGE SCALE GENOMIC DNA]</scope>
    <source>
        <strain>HS</strain>
    </source>
</reference>
<keyword id="KW-0997">Cell inner membrane</keyword>
<keyword id="KW-1003">Cell membrane</keyword>
<keyword id="KW-0169">Cobalamin biosynthesis</keyword>
<keyword id="KW-0460">Magnesium</keyword>
<keyword id="KW-0472">Membrane</keyword>
<keyword id="KW-0808">Transferase</keyword>
<keyword id="KW-0812">Transmembrane</keyword>
<keyword id="KW-1133">Transmembrane helix</keyword>
<feature type="chain" id="PRO_1000062089" description="Adenosylcobinamide-GDP ribazoletransferase">
    <location>
        <begin position="1"/>
        <end position="247"/>
    </location>
</feature>
<feature type="transmembrane region" description="Helical" evidence="1">
    <location>
        <begin position="34"/>
        <end position="54"/>
    </location>
</feature>
<feature type="transmembrane region" description="Helical" evidence="1">
    <location>
        <begin position="59"/>
        <end position="79"/>
    </location>
</feature>
<feature type="transmembrane region" description="Helical" evidence="1">
    <location>
        <begin position="113"/>
        <end position="133"/>
    </location>
</feature>
<feature type="transmembrane region" description="Helical" evidence="1">
    <location>
        <begin position="138"/>
        <end position="158"/>
    </location>
</feature>
<feature type="transmembrane region" description="Helical" evidence="1">
    <location>
        <begin position="194"/>
        <end position="214"/>
    </location>
</feature>
<gene>
    <name evidence="1" type="primary">cobS</name>
    <name type="ordered locus">EcHS_A2115</name>
</gene>
<sequence>MSKLFWAMLSFITRLPVPRRWSQGLDFEHYSRGIITFPLIGLLLGAISGLVFMVLQAWCGVPLAALFSVLVLALMTGGFHLDGLADTCDGVFSARSRDRMLEIMRDSRLGTHGGLALIFVVLAKILVLSELALRGEPILASLAAACAVSRGTAALLMYRHRYAREEGLGNVFIGKIDGRQTCVTLGLAAIFAAVLLPGMHGVAAMVVTMVAIFILGQLLKRTLGGQTGDTLGAAIELGELVFLLALL</sequence>
<dbReference type="EC" id="2.7.8.26" evidence="1"/>
<dbReference type="EMBL" id="CP000802">
    <property type="protein sequence ID" value="ABV06410.1"/>
    <property type="molecule type" value="Genomic_DNA"/>
</dbReference>
<dbReference type="RefSeq" id="WP_001297350.1">
    <property type="nucleotide sequence ID" value="NC_009800.1"/>
</dbReference>
<dbReference type="GeneID" id="93775192"/>
<dbReference type="KEGG" id="ecx:EcHS_A2115"/>
<dbReference type="HOGENOM" id="CLU_057426_1_1_6"/>
<dbReference type="UniPathway" id="UPA00148">
    <property type="reaction ID" value="UER00238"/>
</dbReference>
<dbReference type="GO" id="GO:0005886">
    <property type="term" value="C:plasma membrane"/>
    <property type="evidence" value="ECO:0007669"/>
    <property type="project" value="UniProtKB-SubCell"/>
</dbReference>
<dbReference type="GO" id="GO:0051073">
    <property type="term" value="F:adenosylcobinamide-GDP ribazoletransferase activity"/>
    <property type="evidence" value="ECO:0007669"/>
    <property type="project" value="UniProtKB-UniRule"/>
</dbReference>
<dbReference type="GO" id="GO:0008818">
    <property type="term" value="F:cobalamin 5'-phosphate synthase activity"/>
    <property type="evidence" value="ECO:0007669"/>
    <property type="project" value="UniProtKB-UniRule"/>
</dbReference>
<dbReference type="GO" id="GO:0009236">
    <property type="term" value="P:cobalamin biosynthetic process"/>
    <property type="evidence" value="ECO:0007669"/>
    <property type="project" value="UniProtKB-UniRule"/>
</dbReference>
<dbReference type="HAMAP" id="MF_00719">
    <property type="entry name" value="CobS"/>
    <property type="match status" value="1"/>
</dbReference>
<dbReference type="InterPro" id="IPR003805">
    <property type="entry name" value="CobS"/>
</dbReference>
<dbReference type="NCBIfam" id="TIGR00317">
    <property type="entry name" value="cobS"/>
    <property type="match status" value="1"/>
</dbReference>
<dbReference type="PANTHER" id="PTHR34148">
    <property type="entry name" value="ADENOSYLCOBINAMIDE-GDP RIBAZOLETRANSFERASE"/>
    <property type="match status" value="1"/>
</dbReference>
<dbReference type="PANTHER" id="PTHR34148:SF1">
    <property type="entry name" value="ADENOSYLCOBINAMIDE-GDP RIBAZOLETRANSFERASE"/>
    <property type="match status" value="1"/>
</dbReference>
<dbReference type="Pfam" id="PF02654">
    <property type="entry name" value="CobS"/>
    <property type="match status" value="1"/>
</dbReference>
<name>COBS_ECOHS</name>
<comment type="function">
    <text evidence="1">Joins adenosylcobinamide-GDP and alpha-ribazole to generate adenosylcobalamin (Ado-cobalamin). Also synthesizes adenosylcobalamin 5'-phosphate from adenosylcobinamide-GDP and alpha-ribazole 5'-phosphate.</text>
</comment>
<comment type="catalytic activity">
    <reaction evidence="1">
        <text>alpha-ribazole + adenosylcob(III)inamide-GDP = adenosylcob(III)alamin + GMP + H(+)</text>
        <dbReference type="Rhea" id="RHEA:16049"/>
        <dbReference type="ChEBI" id="CHEBI:10329"/>
        <dbReference type="ChEBI" id="CHEBI:15378"/>
        <dbReference type="ChEBI" id="CHEBI:18408"/>
        <dbReference type="ChEBI" id="CHEBI:58115"/>
        <dbReference type="ChEBI" id="CHEBI:60487"/>
        <dbReference type="EC" id="2.7.8.26"/>
    </reaction>
</comment>
<comment type="catalytic activity">
    <reaction evidence="1">
        <text>alpha-ribazole 5'-phosphate + adenosylcob(III)inamide-GDP = adenosylcob(III)alamin 5'-phosphate + GMP + H(+)</text>
        <dbReference type="Rhea" id="RHEA:23560"/>
        <dbReference type="ChEBI" id="CHEBI:15378"/>
        <dbReference type="ChEBI" id="CHEBI:57918"/>
        <dbReference type="ChEBI" id="CHEBI:58115"/>
        <dbReference type="ChEBI" id="CHEBI:60487"/>
        <dbReference type="ChEBI" id="CHEBI:60493"/>
        <dbReference type="EC" id="2.7.8.26"/>
    </reaction>
</comment>
<comment type="cofactor">
    <cofactor evidence="1">
        <name>Mg(2+)</name>
        <dbReference type="ChEBI" id="CHEBI:18420"/>
    </cofactor>
</comment>
<comment type="pathway">
    <text evidence="1">Cofactor biosynthesis; adenosylcobalamin biosynthesis; adenosylcobalamin from cob(II)yrinate a,c-diamide: step 7/7.</text>
</comment>
<comment type="subcellular location">
    <subcellularLocation>
        <location evidence="1">Cell inner membrane</location>
        <topology evidence="1">Multi-pass membrane protein</topology>
    </subcellularLocation>
</comment>
<comment type="similarity">
    <text evidence="1">Belongs to the CobS family.</text>
</comment>
<accession>A8A1K6</accession>
<protein>
    <recommendedName>
        <fullName evidence="1">Adenosylcobinamide-GDP ribazoletransferase</fullName>
        <ecNumber evidence="1">2.7.8.26</ecNumber>
    </recommendedName>
    <alternativeName>
        <fullName evidence="1">Cobalamin synthase</fullName>
    </alternativeName>
    <alternativeName>
        <fullName evidence="1">Cobalamin-5'-phosphate synthase</fullName>
    </alternativeName>
</protein>
<proteinExistence type="inferred from homology"/>